<dbReference type="EMBL" id="CP000473">
    <property type="protein sequence ID" value="ABJ86055.1"/>
    <property type="molecule type" value="Genomic_DNA"/>
</dbReference>
<dbReference type="SMR" id="Q01WB0"/>
<dbReference type="FunCoup" id="Q01WB0">
    <property type="interactions" value="426"/>
</dbReference>
<dbReference type="STRING" id="234267.Acid_5100"/>
<dbReference type="KEGG" id="sus:Acid_5100"/>
<dbReference type="eggNOG" id="COG1841">
    <property type="taxonomic scope" value="Bacteria"/>
</dbReference>
<dbReference type="HOGENOM" id="CLU_131047_1_1_0"/>
<dbReference type="InParanoid" id="Q01WB0"/>
<dbReference type="OrthoDB" id="9812790at2"/>
<dbReference type="GO" id="GO:0022625">
    <property type="term" value="C:cytosolic large ribosomal subunit"/>
    <property type="evidence" value="ECO:0007669"/>
    <property type="project" value="TreeGrafter"/>
</dbReference>
<dbReference type="GO" id="GO:0003735">
    <property type="term" value="F:structural constituent of ribosome"/>
    <property type="evidence" value="ECO:0007669"/>
    <property type="project" value="InterPro"/>
</dbReference>
<dbReference type="GO" id="GO:0006412">
    <property type="term" value="P:translation"/>
    <property type="evidence" value="ECO:0007669"/>
    <property type="project" value="UniProtKB-UniRule"/>
</dbReference>
<dbReference type="CDD" id="cd01658">
    <property type="entry name" value="Ribosomal_L30"/>
    <property type="match status" value="1"/>
</dbReference>
<dbReference type="Gene3D" id="3.30.1390.20">
    <property type="entry name" value="Ribosomal protein L30, ferredoxin-like fold domain"/>
    <property type="match status" value="1"/>
</dbReference>
<dbReference type="HAMAP" id="MF_01371_B">
    <property type="entry name" value="Ribosomal_uL30_B"/>
    <property type="match status" value="1"/>
</dbReference>
<dbReference type="InterPro" id="IPR036919">
    <property type="entry name" value="Ribo_uL30_ferredoxin-like_sf"/>
</dbReference>
<dbReference type="InterPro" id="IPR005996">
    <property type="entry name" value="Ribosomal_uL30_bac-type"/>
</dbReference>
<dbReference type="InterPro" id="IPR016082">
    <property type="entry name" value="Ribosomal_uL30_ferredoxin-like"/>
</dbReference>
<dbReference type="NCBIfam" id="TIGR01308">
    <property type="entry name" value="rpmD_bact"/>
    <property type="match status" value="1"/>
</dbReference>
<dbReference type="PANTHER" id="PTHR15892:SF2">
    <property type="entry name" value="LARGE RIBOSOMAL SUBUNIT PROTEIN UL30M"/>
    <property type="match status" value="1"/>
</dbReference>
<dbReference type="PANTHER" id="PTHR15892">
    <property type="entry name" value="MITOCHONDRIAL RIBOSOMAL PROTEIN L30"/>
    <property type="match status" value="1"/>
</dbReference>
<dbReference type="Pfam" id="PF00327">
    <property type="entry name" value="Ribosomal_L30"/>
    <property type="match status" value="1"/>
</dbReference>
<dbReference type="PIRSF" id="PIRSF002211">
    <property type="entry name" value="Ribosomal_L30_bac-type"/>
    <property type="match status" value="1"/>
</dbReference>
<dbReference type="SUPFAM" id="SSF55129">
    <property type="entry name" value="Ribosomal protein L30p/L7e"/>
    <property type="match status" value="1"/>
</dbReference>
<sequence length="59" mass="6843">MEGMIRIKLYRSPICTPDKQKRVVKGLGLRKVNQIVERPDTPVFRGMVKKIPHLLMVVE</sequence>
<accession>Q01WB0</accession>
<organism>
    <name type="scientific">Solibacter usitatus (strain Ellin6076)</name>
    <dbReference type="NCBI Taxonomy" id="234267"/>
    <lineage>
        <taxon>Bacteria</taxon>
        <taxon>Pseudomonadati</taxon>
        <taxon>Acidobacteriota</taxon>
        <taxon>Terriglobia</taxon>
        <taxon>Bryobacterales</taxon>
        <taxon>Solibacteraceae</taxon>
        <taxon>Candidatus Solibacter</taxon>
    </lineage>
</organism>
<protein>
    <recommendedName>
        <fullName evidence="1">Large ribosomal subunit protein uL30</fullName>
    </recommendedName>
    <alternativeName>
        <fullName evidence="2">50S ribosomal protein L30</fullName>
    </alternativeName>
</protein>
<keyword id="KW-0687">Ribonucleoprotein</keyword>
<keyword id="KW-0689">Ribosomal protein</keyword>
<evidence type="ECO:0000255" key="1">
    <source>
        <dbReference type="HAMAP-Rule" id="MF_01371"/>
    </source>
</evidence>
<evidence type="ECO:0000305" key="2"/>
<name>RL30_SOLUE</name>
<reference key="1">
    <citation type="journal article" date="2009" name="Appl. Environ. Microbiol.">
        <title>Three genomes from the phylum Acidobacteria provide insight into the lifestyles of these microorganisms in soils.</title>
        <authorList>
            <person name="Ward N.L."/>
            <person name="Challacombe J.F."/>
            <person name="Janssen P.H."/>
            <person name="Henrissat B."/>
            <person name="Coutinho P.M."/>
            <person name="Wu M."/>
            <person name="Xie G."/>
            <person name="Haft D.H."/>
            <person name="Sait M."/>
            <person name="Badger J."/>
            <person name="Barabote R.D."/>
            <person name="Bradley B."/>
            <person name="Brettin T.S."/>
            <person name="Brinkac L.M."/>
            <person name="Bruce D."/>
            <person name="Creasy T."/>
            <person name="Daugherty S.C."/>
            <person name="Davidsen T.M."/>
            <person name="DeBoy R.T."/>
            <person name="Detter J.C."/>
            <person name="Dodson R.J."/>
            <person name="Durkin A.S."/>
            <person name="Ganapathy A."/>
            <person name="Gwinn-Giglio M."/>
            <person name="Han C.S."/>
            <person name="Khouri H."/>
            <person name="Kiss H."/>
            <person name="Kothari S.P."/>
            <person name="Madupu R."/>
            <person name="Nelson K.E."/>
            <person name="Nelson W.C."/>
            <person name="Paulsen I."/>
            <person name="Penn K."/>
            <person name="Ren Q."/>
            <person name="Rosovitz M.J."/>
            <person name="Selengut J.D."/>
            <person name="Shrivastava S."/>
            <person name="Sullivan S.A."/>
            <person name="Tapia R."/>
            <person name="Thompson L.S."/>
            <person name="Watkins K.L."/>
            <person name="Yang Q."/>
            <person name="Yu C."/>
            <person name="Zafar N."/>
            <person name="Zhou L."/>
            <person name="Kuske C.R."/>
        </authorList>
    </citation>
    <scope>NUCLEOTIDE SEQUENCE [LARGE SCALE GENOMIC DNA]</scope>
    <source>
        <strain>Ellin6076</strain>
    </source>
</reference>
<gene>
    <name evidence="1" type="primary">rpmD</name>
    <name type="ordered locus">Acid_5100</name>
</gene>
<feature type="chain" id="PRO_0000347144" description="Large ribosomal subunit protein uL30">
    <location>
        <begin position="1"/>
        <end position="59"/>
    </location>
</feature>
<proteinExistence type="inferred from homology"/>
<comment type="subunit">
    <text evidence="1">Part of the 50S ribosomal subunit.</text>
</comment>
<comment type="similarity">
    <text evidence="1">Belongs to the universal ribosomal protein uL30 family.</text>
</comment>